<organism>
    <name type="scientific">Microchaete diplosiphon</name>
    <name type="common">Fremyella diplosiphon</name>
    <dbReference type="NCBI Taxonomy" id="1197"/>
    <lineage>
        <taxon>Bacteria</taxon>
        <taxon>Bacillati</taxon>
        <taxon>Cyanobacteriota</taxon>
        <taxon>Cyanophyceae</taxon>
        <taxon>Nostocales</taxon>
        <taxon>Rivulariaceae</taxon>
        <taxon>Microchaete</taxon>
    </lineage>
</organism>
<sequence length="289" mass="32315">MPITSAASRLGTTAYQTNPIELRPNWTAEDAKIVIQAVYRQVLGNDYLMQSERLTSLESLLTNGKLSVRDFVRAVAKSELYKTKFLYPHFQTRVIELNFKHLLGRAPYDESEVIEHLDRDQNQGFDADIDSYIDSAEYDTYFGDSIVPYYRDLVTTGVGQRTVGFTRSFRLYRGYANSDRSQLAGSSSRLASDLATNSATAIIAPSGGTQGWSYLPSKQGTAPSRTFGRSSQGSTPRLYRIEVTGISLPRYPKVRRSNKEFIVPYEQLSSTLQQINKLGGKVASITFAQ</sequence>
<proteinExistence type="evidence at protein level"/>
<gene>
    <name type="primary">cpcI2</name>
</gene>
<dbReference type="EMBL" id="M16490">
    <property type="protein sequence ID" value="AAA24887.1"/>
    <property type="molecule type" value="Genomic_DNA"/>
</dbReference>
<dbReference type="PIR" id="B25974">
    <property type="entry name" value="B25974"/>
</dbReference>
<dbReference type="SMR" id="P11400"/>
<dbReference type="GO" id="GO:0030089">
    <property type="term" value="C:phycobilisome"/>
    <property type="evidence" value="ECO:0007669"/>
    <property type="project" value="UniProtKB-KW"/>
</dbReference>
<dbReference type="GO" id="GO:0031676">
    <property type="term" value="C:plasma membrane-derived thylakoid membrane"/>
    <property type="evidence" value="ECO:0007669"/>
    <property type="project" value="UniProtKB-SubCell"/>
</dbReference>
<dbReference type="GO" id="GO:0015979">
    <property type="term" value="P:photosynthesis"/>
    <property type="evidence" value="ECO:0007669"/>
    <property type="project" value="UniProtKB-KW"/>
</dbReference>
<dbReference type="Gene3D" id="1.10.3130.20">
    <property type="entry name" value="Phycobilisome linker domain"/>
    <property type="match status" value="1"/>
</dbReference>
<dbReference type="InterPro" id="IPR008213">
    <property type="entry name" value="CpcD-like_dom"/>
</dbReference>
<dbReference type="InterPro" id="IPR001297">
    <property type="entry name" value="PBS_linker_dom"/>
</dbReference>
<dbReference type="InterPro" id="IPR038255">
    <property type="entry name" value="PBS_linker_sf"/>
</dbReference>
<dbReference type="InterPro" id="IPR016470">
    <property type="entry name" value="Phycobilisome"/>
</dbReference>
<dbReference type="PANTHER" id="PTHR34011:SF6">
    <property type="entry name" value="PHYCOBILIPROTEIN APCE"/>
    <property type="match status" value="1"/>
</dbReference>
<dbReference type="PANTHER" id="PTHR34011">
    <property type="entry name" value="PHYCOBILISOME 32.1 KDA LINKER POLYPEPTIDE, PHYCOCYANIN-ASSOCIATED, ROD 2-RELATED"/>
    <property type="match status" value="1"/>
</dbReference>
<dbReference type="Pfam" id="PF01383">
    <property type="entry name" value="CpcD"/>
    <property type="match status" value="1"/>
</dbReference>
<dbReference type="Pfam" id="PF00427">
    <property type="entry name" value="PBS_linker_poly"/>
    <property type="match status" value="1"/>
</dbReference>
<dbReference type="PIRSF" id="PIRSF005898">
    <property type="entry name" value="Phycobilisome_CpeC/CpcI"/>
    <property type="match status" value="1"/>
</dbReference>
<dbReference type="SMART" id="SM01094">
    <property type="entry name" value="CpcD"/>
    <property type="match status" value="1"/>
</dbReference>
<dbReference type="PROSITE" id="PS51441">
    <property type="entry name" value="CPCD_LIKE"/>
    <property type="match status" value="1"/>
</dbReference>
<dbReference type="PROSITE" id="PS51445">
    <property type="entry name" value="PBS_LINKER"/>
    <property type="match status" value="1"/>
</dbReference>
<protein>
    <recommendedName>
        <fullName>Phycobilisome 39 kDa linker polypeptide, phycocyanin-associated, rod</fullName>
        <shortName>L-39/R</shortName>
    </recommendedName>
</protein>
<keyword id="KW-0042">Antenna complex</keyword>
<keyword id="KW-0903">Direct protein sequencing</keyword>
<keyword id="KW-0472">Membrane</keyword>
<keyword id="KW-0602">Photosynthesis</keyword>
<keyword id="KW-0605">Phycobilisome</keyword>
<keyword id="KW-0793">Thylakoid</keyword>
<comment type="function">
    <text>Rod linker protein, associated with phycocyanin. Linker polypeptides determine the state of aggregation and the location of the disk-shaped phycobiliprotein units within the phycobilisome and modulate their spectroscopic properties in order to mediate a directed and optimal energy transfer.</text>
</comment>
<comment type="subcellular location">
    <subcellularLocation>
        <location>Cellular thylakoid membrane</location>
        <topology>Peripheral membrane protein</topology>
        <orientation>Cytoplasmic side</orientation>
    </subcellularLocation>
    <text>Associated with phycocyanin.</text>
</comment>
<comment type="similarity">
    <text evidence="2">Belongs to the phycobilisome linker protein family.</text>
</comment>
<accession>P11400</accession>
<name>PYR3_MICDP</name>
<reference key="1">
    <citation type="journal article" date="1987" name="J. Bacteriol.">
        <title>Isolation and characterization of light-regulated phycobilisome linker polypeptide genes and their transcription as a polycistronic mRNA.</title>
        <authorList>
            <person name="Lomax T.L."/>
            <person name="Conley P.B."/>
            <person name="Schilling J."/>
            <person name="Grossman A.R."/>
        </authorList>
    </citation>
    <scope>NUCLEOTIDE SEQUENCE [GENOMIC DNA]</scope>
</reference>
<reference key="2">
    <citation type="journal article" date="1992" name="FEBS Lett.">
        <title>Three C-phycoerythrin-associated linker polypeptides in the phycobilisome of green-light-grown Calothrix sp. PCC 7601 (cyanobacteria).</title>
        <authorList>
            <person name="Glauser M."/>
            <person name="Sidler W.A."/>
            <person name="Graham K.W."/>
            <person name="Bryant D.A."/>
            <person name="Frank G."/>
            <person name="Wehrli E."/>
            <person name="Zuber H."/>
        </authorList>
    </citation>
    <scope>PROTEIN SEQUENCE OF 2-22</scope>
</reference>
<feature type="initiator methionine" description="Removed" evidence="4">
    <location>
        <position position="1"/>
    </location>
</feature>
<feature type="chain" id="PRO_0000199214" description="Phycobilisome 39 kDa linker polypeptide, phycocyanin-associated, rod">
    <location>
        <begin position="2"/>
        <end position="289"/>
    </location>
</feature>
<feature type="domain" description="PBS-linker" evidence="2">
    <location>
        <begin position="2"/>
        <end position="180"/>
    </location>
</feature>
<feature type="domain" description="CpcD-like" evidence="1">
    <location>
        <begin position="236"/>
        <end position="288"/>
    </location>
</feature>
<feature type="region of interest" description="Disordered" evidence="3">
    <location>
        <begin position="213"/>
        <end position="233"/>
    </location>
</feature>
<feature type="compositionally biased region" description="Polar residues" evidence="3">
    <location>
        <begin position="216"/>
        <end position="233"/>
    </location>
</feature>
<evidence type="ECO:0000255" key="1">
    <source>
        <dbReference type="PROSITE-ProRule" id="PRU00771"/>
    </source>
</evidence>
<evidence type="ECO:0000255" key="2">
    <source>
        <dbReference type="PROSITE-ProRule" id="PRU00775"/>
    </source>
</evidence>
<evidence type="ECO:0000256" key="3">
    <source>
        <dbReference type="SAM" id="MobiDB-lite"/>
    </source>
</evidence>
<evidence type="ECO:0000269" key="4">
    <source>
    </source>
</evidence>